<dbReference type="EMBL" id="CP000749">
    <property type="protein sequence ID" value="ABR71292.1"/>
    <property type="molecule type" value="Genomic_DNA"/>
</dbReference>
<dbReference type="SMR" id="A6VXW3"/>
<dbReference type="STRING" id="400668.Mmwyl1_2370"/>
<dbReference type="KEGG" id="mmw:Mmwyl1_2370"/>
<dbReference type="eggNOG" id="COG0326">
    <property type="taxonomic scope" value="Bacteria"/>
</dbReference>
<dbReference type="HOGENOM" id="CLU_006684_3_0_6"/>
<dbReference type="OrthoDB" id="9802640at2"/>
<dbReference type="GO" id="GO:0005737">
    <property type="term" value="C:cytoplasm"/>
    <property type="evidence" value="ECO:0007669"/>
    <property type="project" value="UniProtKB-SubCell"/>
</dbReference>
<dbReference type="GO" id="GO:0005524">
    <property type="term" value="F:ATP binding"/>
    <property type="evidence" value="ECO:0007669"/>
    <property type="project" value="UniProtKB-UniRule"/>
</dbReference>
<dbReference type="GO" id="GO:0016887">
    <property type="term" value="F:ATP hydrolysis activity"/>
    <property type="evidence" value="ECO:0007669"/>
    <property type="project" value="InterPro"/>
</dbReference>
<dbReference type="GO" id="GO:0140662">
    <property type="term" value="F:ATP-dependent protein folding chaperone"/>
    <property type="evidence" value="ECO:0007669"/>
    <property type="project" value="InterPro"/>
</dbReference>
<dbReference type="GO" id="GO:0051082">
    <property type="term" value="F:unfolded protein binding"/>
    <property type="evidence" value="ECO:0007669"/>
    <property type="project" value="UniProtKB-UniRule"/>
</dbReference>
<dbReference type="CDD" id="cd16927">
    <property type="entry name" value="HATPase_Hsp90-like"/>
    <property type="match status" value="1"/>
</dbReference>
<dbReference type="FunFam" id="3.30.230.80:FF:000002">
    <property type="entry name" value="Molecular chaperone HtpG"/>
    <property type="match status" value="1"/>
</dbReference>
<dbReference type="FunFam" id="3.30.565.10:FF:000009">
    <property type="entry name" value="Molecular chaperone HtpG"/>
    <property type="match status" value="1"/>
</dbReference>
<dbReference type="Gene3D" id="3.30.230.80">
    <property type="match status" value="1"/>
</dbReference>
<dbReference type="Gene3D" id="3.40.50.11260">
    <property type="match status" value="1"/>
</dbReference>
<dbReference type="Gene3D" id="1.20.120.790">
    <property type="entry name" value="Heat shock protein 90, C-terminal domain"/>
    <property type="match status" value="1"/>
</dbReference>
<dbReference type="Gene3D" id="3.30.565.10">
    <property type="entry name" value="Histidine kinase-like ATPase, C-terminal domain"/>
    <property type="match status" value="1"/>
</dbReference>
<dbReference type="HAMAP" id="MF_00505">
    <property type="entry name" value="HSP90"/>
    <property type="match status" value="1"/>
</dbReference>
<dbReference type="InterPro" id="IPR036890">
    <property type="entry name" value="HATPase_C_sf"/>
</dbReference>
<dbReference type="InterPro" id="IPR019805">
    <property type="entry name" value="Heat_shock_protein_90_CS"/>
</dbReference>
<dbReference type="InterPro" id="IPR037196">
    <property type="entry name" value="HSP90_C"/>
</dbReference>
<dbReference type="InterPro" id="IPR001404">
    <property type="entry name" value="Hsp90_fam"/>
</dbReference>
<dbReference type="InterPro" id="IPR020575">
    <property type="entry name" value="Hsp90_N"/>
</dbReference>
<dbReference type="InterPro" id="IPR020568">
    <property type="entry name" value="Ribosomal_Su5_D2-typ_SF"/>
</dbReference>
<dbReference type="NCBIfam" id="NF003555">
    <property type="entry name" value="PRK05218.1"/>
    <property type="match status" value="1"/>
</dbReference>
<dbReference type="PANTHER" id="PTHR11528">
    <property type="entry name" value="HEAT SHOCK PROTEIN 90 FAMILY MEMBER"/>
    <property type="match status" value="1"/>
</dbReference>
<dbReference type="Pfam" id="PF13589">
    <property type="entry name" value="HATPase_c_3"/>
    <property type="match status" value="1"/>
</dbReference>
<dbReference type="Pfam" id="PF00183">
    <property type="entry name" value="HSP90"/>
    <property type="match status" value="1"/>
</dbReference>
<dbReference type="PIRSF" id="PIRSF002583">
    <property type="entry name" value="Hsp90"/>
    <property type="match status" value="1"/>
</dbReference>
<dbReference type="PRINTS" id="PR00775">
    <property type="entry name" value="HEATSHOCK90"/>
</dbReference>
<dbReference type="SMART" id="SM00387">
    <property type="entry name" value="HATPase_c"/>
    <property type="match status" value="1"/>
</dbReference>
<dbReference type="SUPFAM" id="SSF55874">
    <property type="entry name" value="ATPase domain of HSP90 chaperone/DNA topoisomerase II/histidine kinase"/>
    <property type="match status" value="1"/>
</dbReference>
<dbReference type="SUPFAM" id="SSF110942">
    <property type="entry name" value="HSP90 C-terminal domain"/>
    <property type="match status" value="1"/>
</dbReference>
<dbReference type="SUPFAM" id="SSF54211">
    <property type="entry name" value="Ribosomal protein S5 domain 2-like"/>
    <property type="match status" value="1"/>
</dbReference>
<dbReference type="PROSITE" id="PS00298">
    <property type="entry name" value="HSP90"/>
    <property type="match status" value="1"/>
</dbReference>
<reference key="1">
    <citation type="submission" date="2007-06" db="EMBL/GenBank/DDBJ databases">
        <title>Complete sequence of Marinomonas sp. MWYL1.</title>
        <authorList>
            <consortium name="US DOE Joint Genome Institute"/>
            <person name="Copeland A."/>
            <person name="Lucas S."/>
            <person name="Lapidus A."/>
            <person name="Barry K."/>
            <person name="Glavina del Rio T."/>
            <person name="Dalin E."/>
            <person name="Tice H."/>
            <person name="Pitluck S."/>
            <person name="Kiss H."/>
            <person name="Brettin T."/>
            <person name="Bruce D."/>
            <person name="Detter J.C."/>
            <person name="Han C."/>
            <person name="Schmutz J."/>
            <person name="Larimer F."/>
            <person name="Land M."/>
            <person name="Hauser L."/>
            <person name="Kyrpides N."/>
            <person name="Kim E."/>
            <person name="Johnston A.W.B."/>
            <person name="Todd J.D."/>
            <person name="Rogers R."/>
            <person name="Wexler M."/>
            <person name="Bond P.L."/>
            <person name="Li Y."/>
            <person name="Richardson P."/>
        </authorList>
    </citation>
    <scope>NUCLEOTIDE SEQUENCE [LARGE SCALE GENOMIC DNA]</scope>
    <source>
        <strain>MWYL1</strain>
    </source>
</reference>
<protein>
    <recommendedName>
        <fullName evidence="1">Chaperone protein HtpG</fullName>
    </recommendedName>
    <alternativeName>
        <fullName evidence="1">Heat shock protein HtpG</fullName>
    </alternativeName>
    <alternativeName>
        <fullName evidence="1">High temperature protein G</fullName>
    </alternativeName>
</protein>
<accession>A6VXW3</accession>
<feature type="chain" id="PRO_1000081519" description="Chaperone protein HtpG">
    <location>
        <begin position="1"/>
        <end position="642"/>
    </location>
</feature>
<feature type="region of interest" description="A; substrate-binding" evidence="1">
    <location>
        <begin position="1"/>
        <end position="350"/>
    </location>
</feature>
<feature type="region of interest" description="B" evidence="1">
    <location>
        <begin position="351"/>
        <end position="567"/>
    </location>
</feature>
<feature type="region of interest" description="C" evidence="1">
    <location>
        <begin position="568"/>
        <end position="642"/>
    </location>
</feature>
<organism>
    <name type="scientific">Marinomonas sp. (strain MWYL1)</name>
    <dbReference type="NCBI Taxonomy" id="400668"/>
    <lineage>
        <taxon>Bacteria</taxon>
        <taxon>Pseudomonadati</taxon>
        <taxon>Pseudomonadota</taxon>
        <taxon>Gammaproteobacteria</taxon>
        <taxon>Oceanospirillales</taxon>
        <taxon>Oceanospirillaceae</taxon>
        <taxon>Marinomonas</taxon>
    </lineage>
</organism>
<name>HTPG_MARMS</name>
<evidence type="ECO:0000255" key="1">
    <source>
        <dbReference type="HAMAP-Rule" id="MF_00505"/>
    </source>
</evidence>
<comment type="function">
    <text evidence="1">Molecular chaperone. Has ATPase activity.</text>
</comment>
<comment type="subunit">
    <text evidence="1">Homodimer.</text>
</comment>
<comment type="subcellular location">
    <subcellularLocation>
        <location evidence="1">Cytoplasm</location>
    </subcellularLocation>
</comment>
<comment type="similarity">
    <text evidence="1">Belongs to the heat shock protein 90 family.</text>
</comment>
<sequence>MATDTQKETLGFQTEVKQLLHLMIHSLYSNKEIFLRELISNASDAVDKLRFESVANADLLAEDPNLRVRIEFDKDTNTVVIDDNGVGMSREEAITNLGTIAKSGTSAFLEQLSGDQKKDSQLIGQFGVGFYSAFIVADKVTVETRRAGVAADQAVRWVSDGSGEFTIENIEKDSRGTRIILHLKAGEKEFADNFRLRHLVTKYSDHISIPVEMEKPVYPEMDEEGNPKPVDENKAPEYEAVNSAKALWTRPRNEVTDEEYQEFYKHISHDYQEPLKWSHNKVEGKLEYSSLLYIPSKAPYDLWNRDMQRGLKLYVQRVFIMDEAEAFLPPYMRFVKGVVDSNDLSLNVSREILQNDHAVDSMRSALTKRVLDMLGKMAKNEPEDYQKFWDEFGNVIKEGPADDMGNKDKIAGLLRFSSTHTDAAAQTVSLADYIERMQEGQDKIYYIYAESHNTAKNSPHLEILRKKGFEVLLLSDRIDEWMMSSLQEFEGKSFQDVTKGKLDLADQENEEEKKEKEEKAEKMKPLLDRMKAVLNEKVAGVNSTDRLTNSPACLVVGEYDMGLQMRRLLEQAGQKLPESKPTLEVNPDHPIVAKMDSETDEERFADMAWLLFEQATLSEGGQLEDPATFVSRMNKLIVQLSK</sequence>
<proteinExistence type="inferred from homology"/>
<gene>
    <name evidence="1" type="primary">htpG</name>
    <name type="ordered locus">Mmwyl1_2370</name>
</gene>
<keyword id="KW-0067">ATP-binding</keyword>
<keyword id="KW-0143">Chaperone</keyword>
<keyword id="KW-0963">Cytoplasm</keyword>
<keyword id="KW-0547">Nucleotide-binding</keyword>
<keyword id="KW-0346">Stress response</keyword>